<feature type="signal peptide" evidence="1">
    <location>
        <begin position="1"/>
        <end position="37"/>
    </location>
</feature>
<feature type="chain" id="PRO_5000115099" description="Secretion monitor">
    <location>
        <begin position="38"/>
        <end position="177"/>
    </location>
</feature>
<protein>
    <recommendedName>
        <fullName evidence="1">Secretion monitor</fullName>
    </recommendedName>
</protein>
<name>SECM_YERPN</name>
<evidence type="ECO:0000255" key="1">
    <source>
        <dbReference type="HAMAP-Rule" id="MF_01332"/>
    </source>
</evidence>
<sequence length="177" mass="19847">MIGILNRWRQFGRRYFWPHLLLGMVAASLGVPLNLSGVPDHAALANTSSSQSRQNHGTTNFNSLALLHDIHRRLSFSVDYWQQHALRTVIRHLSFALAPQAAYARVQEVAETERVAPSKIQQLALLDTLNALLTHEFKPPAIIRYTEQVERPVLSPYKPGLWLAQVQGIRAGPANLS</sequence>
<accession>Q1CML9</accession>
<accession>C4GNY5</accession>
<organism>
    <name type="scientific">Yersinia pestis bv. Antiqua (strain Nepal516)</name>
    <dbReference type="NCBI Taxonomy" id="377628"/>
    <lineage>
        <taxon>Bacteria</taxon>
        <taxon>Pseudomonadati</taxon>
        <taxon>Pseudomonadota</taxon>
        <taxon>Gammaproteobacteria</taxon>
        <taxon>Enterobacterales</taxon>
        <taxon>Yersiniaceae</taxon>
        <taxon>Yersinia</taxon>
    </lineage>
</organism>
<dbReference type="EMBL" id="CP000305">
    <property type="protein sequence ID" value="ABG16761.1"/>
    <property type="molecule type" value="Genomic_DNA"/>
</dbReference>
<dbReference type="EMBL" id="ACNQ01000006">
    <property type="protein sequence ID" value="EEO78217.1"/>
    <property type="molecule type" value="Genomic_DNA"/>
</dbReference>
<dbReference type="RefSeq" id="WP_002210427.1">
    <property type="nucleotide sequence ID" value="NZ_ACNQ01000006.1"/>
</dbReference>
<dbReference type="GeneID" id="57974052"/>
<dbReference type="KEGG" id="ypn:YPN_0429"/>
<dbReference type="HOGENOM" id="CLU_108853_0_0_6"/>
<dbReference type="Proteomes" id="UP000008936">
    <property type="component" value="Chromosome"/>
</dbReference>
<dbReference type="GO" id="GO:0005829">
    <property type="term" value="C:cytosol"/>
    <property type="evidence" value="ECO:0007669"/>
    <property type="project" value="UniProtKB-SubCell"/>
</dbReference>
<dbReference type="GO" id="GO:0042597">
    <property type="term" value="C:periplasmic space"/>
    <property type="evidence" value="ECO:0007669"/>
    <property type="project" value="UniProtKB-SubCell"/>
</dbReference>
<dbReference type="GO" id="GO:0045182">
    <property type="term" value="F:translation regulator activity"/>
    <property type="evidence" value="ECO:0007669"/>
    <property type="project" value="InterPro"/>
</dbReference>
<dbReference type="HAMAP" id="MF_01332">
    <property type="entry name" value="SecM"/>
    <property type="match status" value="1"/>
</dbReference>
<dbReference type="InterPro" id="IPR009502">
    <property type="entry name" value="SecM"/>
</dbReference>
<dbReference type="NCBIfam" id="NF002799">
    <property type="entry name" value="PRK02943.1-1"/>
    <property type="match status" value="1"/>
</dbReference>
<dbReference type="Pfam" id="PF06558">
    <property type="entry name" value="SecM"/>
    <property type="match status" value="1"/>
</dbReference>
<dbReference type="PIRSF" id="PIRSF004572">
    <property type="entry name" value="SecM"/>
    <property type="match status" value="1"/>
</dbReference>
<keyword id="KW-0963">Cytoplasm</keyword>
<keyword id="KW-0574">Periplasm</keyword>
<keyword id="KW-0732">Signal</keyword>
<reference key="1">
    <citation type="journal article" date="2006" name="J. Bacteriol.">
        <title>Complete genome sequence of Yersinia pestis strains Antiqua and Nepal516: evidence of gene reduction in an emerging pathogen.</title>
        <authorList>
            <person name="Chain P.S.G."/>
            <person name="Hu P."/>
            <person name="Malfatti S.A."/>
            <person name="Radnedge L."/>
            <person name="Larimer F."/>
            <person name="Vergez L.M."/>
            <person name="Worsham P."/>
            <person name="Chu M.C."/>
            <person name="Andersen G.L."/>
        </authorList>
    </citation>
    <scope>NUCLEOTIDE SEQUENCE [LARGE SCALE GENOMIC DNA]</scope>
    <source>
        <strain>Nepal516</strain>
    </source>
</reference>
<reference key="2">
    <citation type="submission" date="2009-04" db="EMBL/GenBank/DDBJ databases">
        <title>Yersinia pestis Nepal516A whole genome shotgun sequencing project.</title>
        <authorList>
            <person name="Plunkett G. III"/>
            <person name="Anderson B.D."/>
            <person name="Baumler D.J."/>
            <person name="Burland V."/>
            <person name="Cabot E.L."/>
            <person name="Glasner J.D."/>
            <person name="Mau B."/>
            <person name="Neeno-Eckwall E."/>
            <person name="Perna N.T."/>
            <person name="Munk A.C."/>
            <person name="Tapia R."/>
            <person name="Green L.D."/>
            <person name="Rogers Y.C."/>
            <person name="Detter J.C."/>
            <person name="Bruce D.C."/>
            <person name="Brettin T.S."/>
        </authorList>
    </citation>
    <scope>NUCLEOTIDE SEQUENCE [LARGE SCALE GENOMIC DNA]</scope>
    <source>
        <strain>Nepal516</strain>
    </source>
</reference>
<proteinExistence type="inferred from homology"/>
<gene>
    <name evidence="1" type="primary">secM</name>
    <name type="ordered locus">YPN_0429</name>
    <name type="ORF">YP516_0443</name>
</gene>
<comment type="function">
    <text evidence="1">Regulates secA expression by translational coupling of the secM secA operon. Translational pausing at a specific Pro residue 5 residues before the end of the protein may allow disruption of a mRNA repressor helix that normally suppresses secA translation initiation.</text>
</comment>
<comment type="subcellular location">
    <subcellularLocation>
        <location evidence="1">Cytoplasm</location>
        <location evidence="1">Cytosol</location>
    </subcellularLocation>
    <subcellularLocation>
        <location evidence="1">Periplasm</location>
    </subcellularLocation>
    <text evidence="1">The active form is cytosolic, while the periplasmic form is rapidly degraded, mainly by the tail-specific protease.</text>
</comment>
<comment type="similarity">
    <text evidence="1">Belongs to the SecM family.</text>
</comment>